<dbReference type="EMBL" id="JU176353">
    <property type="protein sequence ID" value="AFJ51876.1"/>
    <property type="molecule type" value="mRNA"/>
</dbReference>
<dbReference type="SMR" id="J3SFJ3"/>
<dbReference type="GO" id="GO:0005737">
    <property type="term" value="C:cytoplasm"/>
    <property type="evidence" value="ECO:0007669"/>
    <property type="project" value="TreeGrafter"/>
</dbReference>
<dbReference type="GO" id="GO:0005576">
    <property type="term" value="C:extracellular region"/>
    <property type="evidence" value="ECO:0007669"/>
    <property type="project" value="UniProtKB-SubCell"/>
</dbReference>
<dbReference type="GO" id="GO:0005509">
    <property type="term" value="F:calcium ion binding"/>
    <property type="evidence" value="ECO:0007669"/>
    <property type="project" value="TreeGrafter"/>
</dbReference>
<dbReference type="FunFam" id="2.170.150.10:FF:000001">
    <property type="entry name" value="Tumor protein, translationally-controlled 1"/>
    <property type="match status" value="1"/>
</dbReference>
<dbReference type="Gene3D" id="2.170.150.10">
    <property type="entry name" value="Metal Binding Protein, Guanine Nucleotide Exchange Factor, Chain A"/>
    <property type="match status" value="1"/>
</dbReference>
<dbReference type="InterPro" id="IPR011057">
    <property type="entry name" value="Mss4-like_sf"/>
</dbReference>
<dbReference type="InterPro" id="IPR011323">
    <property type="entry name" value="Mss4/transl-control_tumour"/>
</dbReference>
<dbReference type="InterPro" id="IPR034737">
    <property type="entry name" value="TCTP"/>
</dbReference>
<dbReference type="InterPro" id="IPR018103">
    <property type="entry name" value="Translation_control_tumour_CS"/>
</dbReference>
<dbReference type="InterPro" id="IPR018105">
    <property type="entry name" value="Translational_control_tumour_p"/>
</dbReference>
<dbReference type="PANTHER" id="PTHR11991">
    <property type="entry name" value="TRANSLATIONALLY CONTROLLED TUMOR PROTEIN-RELATED"/>
    <property type="match status" value="1"/>
</dbReference>
<dbReference type="PANTHER" id="PTHR11991:SF0">
    <property type="entry name" value="TRANSLATIONALLY-CONTROLLED TUMOR PROTEIN"/>
    <property type="match status" value="1"/>
</dbReference>
<dbReference type="Pfam" id="PF00838">
    <property type="entry name" value="TCTP"/>
    <property type="match status" value="1"/>
</dbReference>
<dbReference type="PRINTS" id="PR01653">
    <property type="entry name" value="TCTPROTEIN"/>
</dbReference>
<dbReference type="SUPFAM" id="SSF51316">
    <property type="entry name" value="Mss4-like"/>
    <property type="match status" value="1"/>
</dbReference>
<dbReference type="PROSITE" id="PS01002">
    <property type="entry name" value="TCTP_1"/>
    <property type="match status" value="1"/>
</dbReference>
<dbReference type="PROSITE" id="PS01003">
    <property type="entry name" value="TCTP_2"/>
    <property type="match status" value="1"/>
</dbReference>
<dbReference type="PROSITE" id="PS51797">
    <property type="entry name" value="TCTP_3"/>
    <property type="match status" value="1"/>
</dbReference>
<feature type="chain" id="PRO_0000429459" description="Translationally-controlled tumor protein homolog">
    <location>
        <begin position="1"/>
        <end position="172"/>
    </location>
</feature>
<feature type="domain" description="TCTP" evidence="2">
    <location>
        <begin position="1"/>
        <end position="172"/>
    </location>
</feature>
<accession>J3SFJ3</accession>
<organism>
    <name type="scientific">Crotalus adamanteus</name>
    <name type="common">Eastern diamondback rattlesnake</name>
    <dbReference type="NCBI Taxonomy" id="8729"/>
    <lineage>
        <taxon>Eukaryota</taxon>
        <taxon>Metazoa</taxon>
        <taxon>Chordata</taxon>
        <taxon>Craniata</taxon>
        <taxon>Vertebrata</taxon>
        <taxon>Euteleostomi</taxon>
        <taxon>Lepidosauria</taxon>
        <taxon>Squamata</taxon>
        <taxon>Bifurcata</taxon>
        <taxon>Unidentata</taxon>
        <taxon>Episquamata</taxon>
        <taxon>Toxicofera</taxon>
        <taxon>Serpentes</taxon>
        <taxon>Colubroidea</taxon>
        <taxon>Viperidae</taxon>
        <taxon>Crotalinae</taxon>
        <taxon>Crotalus</taxon>
    </lineage>
</organism>
<comment type="function">
    <text evidence="1">Venom protein that causes edema, enhances vascular permeability and is likely related to the inflammatory activity of the venom.</text>
</comment>
<comment type="subcellular location">
    <subcellularLocation>
        <location evidence="1">Secreted</location>
    </subcellularLocation>
</comment>
<comment type="tissue specificity">
    <text>Expressed by the venom gland.</text>
</comment>
<comment type="miscellaneous">
    <text evidence="1">Secretion of this protein from cells may proceed via an ER/Golgi-independent pathway, probably mediated by secreted vesicles called exosomes.</text>
</comment>
<comment type="similarity">
    <text evidence="2">Belongs to the TCTP family.</text>
</comment>
<sequence length="172" mass="19433">MIIYRDCISQDEMFSDIYKITEVANGLCLEVEGKMVSRKEGEIDDALIGGNASAEGPEGDGTEATVITGVDIVMNHHLQETSFTKESYKKYIKDYMKSIKARLEETKPERVKPFMTGAAEQVKHILGNFKNYQFFVGENMNPDGMVGLLDFREDGVTPYMIFFKDGLEMEKC</sequence>
<name>TCTP_CROAD</name>
<keyword id="KW-0964">Secreted</keyword>
<protein>
    <recommendedName>
        <fullName>Translationally-controlled tumor protein homolog</fullName>
        <shortName>TCTP</shortName>
    </recommendedName>
</protein>
<proteinExistence type="evidence at transcript level"/>
<evidence type="ECO:0000250" key="1"/>
<evidence type="ECO:0000255" key="2">
    <source>
        <dbReference type="PROSITE-ProRule" id="PRU01133"/>
    </source>
</evidence>
<reference key="1">
    <citation type="journal article" date="2012" name="BMC Genomics">
        <title>The venom-gland transcriptome of the eastern diamondback rattlesnake (Crotalus adamanteus).</title>
        <authorList>
            <person name="Rokyta D.R."/>
            <person name="Lemmon A.R."/>
            <person name="Margres M.J."/>
            <person name="Aronow K."/>
        </authorList>
    </citation>
    <scope>NUCLEOTIDE SEQUENCE [MRNA]</scope>
    <source>
        <tissue>Venom gland</tissue>
    </source>
</reference>